<gene>
    <name evidence="1" type="primary">secA</name>
    <name type="ordered locus">PMI2061</name>
</gene>
<evidence type="ECO:0000255" key="1">
    <source>
        <dbReference type="HAMAP-Rule" id="MF_01382"/>
    </source>
</evidence>
<evidence type="ECO:0000256" key="2">
    <source>
        <dbReference type="SAM" id="MobiDB-lite"/>
    </source>
</evidence>
<sequence length="902" mass="102573">MLGKIVTKIFGSRNERAIRRMRKVVAQINQLEPEFEKLTDDELKAKTDEFRERLKKGEKEEDILPEAFATVREASKRVFGMRHFDVQLIGGMVLNDRCIAEMRTGEGKTLTATLPAYLNALSGKGVHVVTVNDYLAQRDAENNRPLFEFLGLSVGINLPNMAPPAKREAYNADITYGTNNEFGFDYLRDNMAFSPEERVQRKLHYALVDEVDSILIDEARTPLIISGPAEDSSELYIKMNKVIPHLVPQEKEDSDTFQGEGDYSVDEKTRQVNITERGLVKIEGLLAEAGMMKEGESLYSPANIMLMHHVTAALRAHALFTKDVDYIVKDGEVIIVDEHTGRTMQGRRWSDGLHQAVEAKEGVKIQNENQTLASITFQNYFRLYEKLAGMTGTADTEAFEFNSIYRLETIVIPTNRPMVRKDLPDLVYMNEKGKFAAIIEDIRERTKNGQPVLVGTISIEKSEEISQALTKANIHHNVLNAKFHAMEADIIANAGLPSAVTIATNMAGRGTDIVLGGSWQTEVAKLENPTEEQIEEIKAQWQKRHDAVLASGGLHIIGTERHESRRIDNQLRGRAGRQGDEGSSRFYLSMEDSLMRIFASDKVSGMMRKLGMNETEAIEHPWVTKAIANAQRKVENRNFDIRKQLLEYDDVANDQRRAIYTQRNELLDVADVSETIDSIRQDVFTSMIDNYIPPQSLEEMWDIEGLTACLQNDFDLNLPIKEWLDKEPELHEETLRERILEKSIEVYKAKEEIVSAEMMRNFEKGVMLQTLDSLWKEHLAAMDYLRQGIHLRGYAQKDPKQEYKRESFAMFANMLESLKYEVISTLSKVQVRLPEEVEELERRRREEAERLAKQQQLSHEVTKESQMSAVDGQVASGKKVGRNEPCPCGSGKKYKHCHGKLG</sequence>
<keyword id="KW-0067">ATP-binding</keyword>
<keyword id="KW-0997">Cell inner membrane</keyword>
<keyword id="KW-1003">Cell membrane</keyword>
<keyword id="KW-0963">Cytoplasm</keyword>
<keyword id="KW-0472">Membrane</keyword>
<keyword id="KW-0479">Metal-binding</keyword>
<keyword id="KW-0547">Nucleotide-binding</keyword>
<keyword id="KW-0653">Protein transport</keyword>
<keyword id="KW-1185">Reference proteome</keyword>
<keyword id="KW-1278">Translocase</keyword>
<keyword id="KW-0811">Translocation</keyword>
<keyword id="KW-0813">Transport</keyword>
<keyword id="KW-0862">Zinc</keyword>
<proteinExistence type="inferred from homology"/>
<dbReference type="EC" id="7.4.2.8" evidence="1"/>
<dbReference type="EMBL" id="AM942759">
    <property type="protein sequence ID" value="CAR44129.1"/>
    <property type="molecule type" value="Genomic_DNA"/>
</dbReference>
<dbReference type="RefSeq" id="WP_004244101.1">
    <property type="nucleotide sequence ID" value="NC_010554.1"/>
</dbReference>
<dbReference type="SMR" id="B4F102"/>
<dbReference type="EnsemblBacteria" id="CAR44129">
    <property type="protein sequence ID" value="CAR44129"/>
    <property type="gene ID" value="PMI2061"/>
</dbReference>
<dbReference type="GeneID" id="6802549"/>
<dbReference type="KEGG" id="pmr:PMI2061"/>
<dbReference type="eggNOG" id="COG0653">
    <property type="taxonomic scope" value="Bacteria"/>
</dbReference>
<dbReference type="HOGENOM" id="CLU_005314_3_0_6"/>
<dbReference type="Proteomes" id="UP000008319">
    <property type="component" value="Chromosome"/>
</dbReference>
<dbReference type="GO" id="GO:0031522">
    <property type="term" value="C:cell envelope Sec protein transport complex"/>
    <property type="evidence" value="ECO:0007669"/>
    <property type="project" value="TreeGrafter"/>
</dbReference>
<dbReference type="GO" id="GO:0005829">
    <property type="term" value="C:cytosol"/>
    <property type="evidence" value="ECO:0007669"/>
    <property type="project" value="TreeGrafter"/>
</dbReference>
<dbReference type="GO" id="GO:0005886">
    <property type="term" value="C:plasma membrane"/>
    <property type="evidence" value="ECO:0007669"/>
    <property type="project" value="UniProtKB-SubCell"/>
</dbReference>
<dbReference type="GO" id="GO:0005524">
    <property type="term" value="F:ATP binding"/>
    <property type="evidence" value="ECO:0007669"/>
    <property type="project" value="UniProtKB-UniRule"/>
</dbReference>
<dbReference type="GO" id="GO:0046872">
    <property type="term" value="F:metal ion binding"/>
    <property type="evidence" value="ECO:0007669"/>
    <property type="project" value="UniProtKB-KW"/>
</dbReference>
<dbReference type="GO" id="GO:0008564">
    <property type="term" value="F:protein-exporting ATPase activity"/>
    <property type="evidence" value="ECO:0007669"/>
    <property type="project" value="UniProtKB-EC"/>
</dbReference>
<dbReference type="GO" id="GO:0065002">
    <property type="term" value="P:intracellular protein transmembrane transport"/>
    <property type="evidence" value="ECO:0007669"/>
    <property type="project" value="UniProtKB-UniRule"/>
</dbReference>
<dbReference type="GO" id="GO:0017038">
    <property type="term" value="P:protein import"/>
    <property type="evidence" value="ECO:0007669"/>
    <property type="project" value="InterPro"/>
</dbReference>
<dbReference type="GO" id="GO:0006605">
    <property type="term" value="P:protein targeting"/>
    <property type="evidence" value="ECO:0007669"/>
    <property type="project" value="UniProtKB-UniRule"/>
</dbReference>
<dbReference type="GO" id="GO:0043952">
    <property type="term" value="P:protein transport by the Sec complex"/>
    <property type="evidence" value="ECO:0007669"/>
    <property type="project" value="TreeGrafter"/>
</dbReference>
<dbReference type="CDD" id="cd17928">
    <property type="entry name" value="DEXDc_SecA"/>
    <property type="match status" value="1"/>
</dbReference>
<dbReference type="CDD" id="cd18803">
    <property type="entry name" value="SF2_C_secA"/>
    <property type="match status" value="1"/>
</dbReference>
<dbReference type="FunFam" id="1.10.3060.10:FF:000001">
    <property type="entry name" value="Preprotein translocase subunit SecA"/>
    <property type="match status" value="1"/>
</dbReference>
<dbReference type="FunFam" id="3.40.50.300:FF:000081">
    <property type="entry name" value="Preprotein translocase subunit SecA"/>
    <property type="match status" value="1"/>
</dbReference>
<dbReference type="FunFam" id="3.40.50.300:FF:000113">
    <property type="entry name" value="Preprotein translocase subunit SecA"/>
    <property type="match status" value="1"/>
</dbReference>
<dbReference type="FunFam" id="3.90.1440.10:FF:000001">
    <property type="entry name" value="Preprotein translocase subunit SecA"/>
    <property type="match status" value="1"/>
</dbReference>
<dbReference type="Gene3D" id="1.10.3060.10">
    <property type="entry name" value="Helical scaffold and wing domains of SecA"/>
    <property type="match status" value="1"/>
</dbReference>
<dbReference type="Gene3D" id="3.40.50.300">
    <property type="entry name" value="P-loop containing nucleotide triphosphate hydrolases"/>
    <property type="match status" value="2"/>
</dbReference>
<dbReference type="Gene3D" id="3.90.1440.10">
    <property type="entry name" value="SecA, preprotein cross-linking domain"/>
    <property type="match status" value="1"/>
</dbReference>
<dbReference type="HAMAP" id="MF_01382">
    <property type="entry name" value="SecA"/>
    <property type="match status" value="1"/>
</dbReference>
<dbReference type="InterPro" id="IPR014001">
    <property type="entry name" value="Helicase_ATP-bd"/>
</dbReference>
<dbReference type="InterPro" id="IPR027417">
    <property type="entry name" value="P-loop_NTPase"/>
</dbReference>
<dbReference type="InterPro" id="IPR004027">
    <property type="entry name" value="SEC_C_motif"/>
</dbReference>
<dbReference type="InterPro" id="IPR000185">
    <property type="entry name" value="SecA"/>
</dbReference>
<dbReference type="InterPro" id="IPR020937">
    <property type="entry name" value="SecA_CS"/>
</dbReference>
<dbReference type="InterPro" id="IPR011115">
    <property type="entry name" value="SecA_DEAD"/>
</dbReference>
<dbReference type="InterPro" id="IPR014018">
    <property type="entry name" value="SecA_motor_DEAD"/>
</dbReference>
<dbReference type="InterPro" id="IPR011130">
    <property type="entry name" value="SecA_preprotein_X-link_dom"/>
</dbReference>
<dbReference type="InterPro" id="IPR044722">
    <property type="entry name" value="SecA_SF2_C"/>
</dbReference>
<dbReference type="InterPro" id="IPR011116">
    <property type="entry name" value="SecA_Wing/Scaffold"/>
</dbReference>
<dbReference type="InterPro" id="IPR036266">
    <property type="entry name" value="SecA_Wing/Scaffold_sf"/>
</dbReference>
<dbReference type="InterPro" id="IPR036670">
    <property type="entry name" value="SecA_X-link_sf"/>
</dbReference>
<dbReference type="NCBIfam" id="NF009538">
    <property type="entry name" value="PRK12904.1"/>
    <property type="match status" value="1"/>
</dbReference>
<dbReference type="NCBIfam" id="TIGR00963">
    <property type="entry name" value="secA"/>
    <property type="match status" value="1"/>
</dbReference>
<dbReference type="PANTHER" id="PTHR30612:SF0">
    <property type="entry name" value="CHLOROPLAST PROTEIN-TRANSPORTING ATPASE"/>
    <property type="match status" value="1"/>
</dbReference>
<dbReference type="PANTHER" id="PTHR30612">
    <property type="entry name" value="SECA INNER MEMBRANE COMPONENT OF SEC PROTEIN SECRETION SYSTEM"/>
    <property type="match status" value="1"/>
</dbReference>
<dbReference type="Pfam" id="PF21090">
    <property type="entry name" value="P-loop_SecA"/>
    <property type="match status" value="1"/>
</dbReference>
<dbReference type="Pfam" id="PF02810">
    <property type="entry name" value="SEC-C"/>
    <property type="match status" value="1"/>
</dbReference>
<dbReference type="Pfam" id="PF07517">
    <property type="entry name" value="SecA_DEAD"/>
    <property type="match status" value="1"/>
</dbReference>
<dbReference type="Pfam" id="PF01043">
    <property type="entry name" value="SecA_PP_bind"/>
    <property type="match status" value="1"/>
</dbReference>
<dbReference type="Pfam" id="PF07516">
    <property type="entry name" value="SecA_SW"/>
    <property type="match status" value="1"/>
</dbReference>
<dbReference type="PRINTS" id="PR00906">
    <property type="entry name" value="SECA"/>
</dbReference>
<dbReference type="SMART" id="SM00957">
    <property type="entry name" value="SecA_DEAD"/>
    <property type="match status" value="1"/>
</dbReference>
<dbReference type="SMART" id="SM00958">
    <property type="entry name" value="SecA_PP_bind"/>
    <property type="match status" value="1"/>
</dbReference>
<dbReference type="SUPFAM" id="SSF81886">
    <property type="entry name" value="Helical scaffold and wing domains of SecA"/>
    <property type="match status" value="1"/>
</dbReference>
<dbReference type="SUPFAM" id="SSF52540">
    <property type="entry name" value="P-loop containing nucleoside triphosphate hydrolases"/>
    <property type="match status" value="2"/>
</dbReference>
<dbReference type="SUPFAM" id="SSF81767">
    <property type="entry name" value="Pre-protein crosslinking domain of SecA"/>
    <property type="match status" value="1"/>
</dbReference>
<dbReference type="PROSITE" id="PS01312">
    <property type="entry name" value="SECA"/>
    <property type="match status" value="1"/>
</dbReference>
<dbReference type="PROSITE" id="PS51196">
    <property type="entry name" value="SECA_MOTOR_DEAD"/>
    <property type="match status" value="1"/>
</dbReference>
<protein>
    <recommendedName>
        <fullName evidence="1">Protein translocase subunit SecA</fullName>
        <ecNumber evidence="1">7.4.2.8</ecNumber>
    </recommendedName>
</protein>
<feature type="chain" id="PRO_1000145045" description="Protein translocase subunit SecA">
    <location>
        <begin position="1"/>
        <end position="902"/>
    </location>
</feature>
<feature type="region of interest" description="Disordered" evidence="2">
    <location>
        <begin position="850"/>
        <end position="902"/>
    </location>
</feature>
<feature type="compositionally biased region" description="Polar residues" evidence="2">
    <location>
        <begin position="853"/>
        <end position="868"/>
    </location>
</feature>
<feature type="compositionally biased region" description="Basic residues" evidence="2">
    <location>
        <begin position="892"/>
        <end position="902"/>
    </location>
</feature>
<feature type="binding site" evidence="1">
    <location>
        <position position="87"/>
    </location>
    <ligand>
        <name>ATP</name>
        <dbReference type="ChEBI" id="CHEBI:30616"/>
    </ligand>
</feature>
<feature type="binding site" evidence="1">
    <location>
        <begin position="105"/>
        <end position="109"/>
    </location>
    <ligand>
        <name>ATP</name>
        <dbReference type="ChEBI" id="CHEBI:30616"/>
    </ligand>
</feature>
<feature type="binding site" evidence="1">
    <location>
        <position position="512"/>
    </location>
    <ligand>
        <name>ATP</name>
        <dbReference type="ChEBI" id="CHEBI:30616"/>
    </ligand>
</feature>
<feature type="binding site" evidence="1">
    <location>
        <position position="886"/>
    </location>
    <ligand>
        <name>Zn(2+)</name>
        <dbReference type="ChEBI" id="CHEBI:29105"/>
    </ligand>
</feature>
<feature type="binding site" evidence="1">
    <location>
        <position position="888"/>
    </location>
    <ligand>
        <name>Zn(2+)</name>
        <dbReference type="ChEBI" id="CHEBI:29105"/>
    </ligand>
</feature>
<feature type="binding site" evidence="1">
    <location>
        <position position="897"/>
    </location>
    <ligand>
        <name>Zn(2+)</name>
        <dbReference type="ChEBI" id="CHEBI:29105"/>
    </ligand>
</feature>
<feature type="binding site" evidence="1">
    <location>
        <position position="898"/>
    </location>
    <ligand>
        <name>Zn(2+)</name>
        <dbReference type="ChEBI" id="CHEBI:29105"/>
    </ligand>
</feature>
<organism>
    <name type="scientific">Proteus mirabilis (strain HI4320)</name>
    <dbReference type="NCBI Taxonomy" id="529507"/>
    <lineage>
        <taxon>Bacteria</taxon>
        <taxon>Pseudomonadati</taxon>
        <taxon>Pseudomonadota</taxon>
        <taxon>Gammaproteobacteria</taxon>
        <taxon>Enterobacterales</taxon>
        <taxon>Morganellaceae</taxon>
        <taxon>Proteus</taxon>
    </lineage>
</organism>
<name>SECA_PROMH</name>
<reference key="1">
    <citation type="journal article" date="2008" name="J. Bacteriol.">
        <title>Complete genome sequence of uropathogenic Proteus mirabilis, a master of both adherence and motility.</title>
        <authorList>
            <person name="Pearson M.M."/>
            <person name="Sebaihia M."/>
            <person name="Churcher C."/>
            <person name="Quail M.A."/>
            <person name="Seshasayee A.S."/>
            <person name="Luscombe N.M."/>
            <person name="Abdellah Z."/>
            <person name="Arrosmith C."/>
            <person name="Atkin B."/>
            <person name="Chillingworth T."/>
            <person name="Hauser H."/>
            <person name="Jagels K."/>
            <person name="Moule S."/>
            <person name="Mungall K."/>
            <person name="Norbertczak H."/>
            <person name="Rabbinowitsch E."/>
            <person name="Walker D."/>
            <person name="Whithead S."/>
            <person name="Thomson N.R."/>
            <person name="Rather P.N."/>
            <person name="Parkhill J."/>
            <person name="Mobley H.L.T."/>
        </authorList>
    </citation>
    <scope>NUCLEOTIDE SEQUENCE [LARGE SCALE GENOMIC DNA]</scope>
    <source>
        <strain>HI4320</strain>
    </source>
</reference>
<comment type="function">
    <text evidence="1">Part of the Sec protein translocase complex. Interacts with the SecYEG preprotein conducting channel. Has a central role in coupling the hydrolysis of ATP to the transfer of proteins into and across the cell membrane, serving both as a receptor for the preprotein-SecB complex and as an ATP-driven molecular motor driving the stepwise translocation of polypeptide chains across the membrane.</text>
</comment>
<comment type="catalytic activity">
    <reaction evidence="1">
        <text>ATP + H2O + cellular proteinSide 1 = ADP + phosphate + cellular proteinSide 2.</text>
        <dbReference type="EC" id="7.4.2.8"/>
    </reaction>
</comment>
<comment type="cofactor">
    <cofactor evidence="1">
        <name>Zn(2+)</name>
        <dbReference type="ChEBI" id="CHEBI:29105"/>
    </cofactor>
    <text evidence="1">May bind 1 zinc ion per subunit.</text>
</comment>
<comment type="subunit">
    <text evidence="1">Monomer and homodimer. Part of the essential Sec protein translocation apparatus which comprises SecA, SecYEG and auxiliary proteins SecDF-YajC and YidC.</text>
</comment>
<comment type="subcellular location">
    <subcellularLocation>
        <location evidence="1">Cell inner membrane</location>
        <topology evidence="1">Peripheral membrane protein</topology>
        <orientation evidence="1">Cytoplasmic side</orientation>
    </subcellularLocation>
    <subcellularLocation>
        <location evidence="1">Cytoplasm</location>
    </subcellularLocation>
    <text evidence="1">Distribution is 50-50.</text>
</comment>
<comment type="induction">
    <text evidence="1">Repressed under conditions of excess protein secretion capacity and derepressed when protein secretion becomes limiting. This is regulated by SecM.</text>
</comment>
<comment type="similarity">
    <text evidence="1">Belongs to the SecA family.</text>
</comment>
<accession>B4F102</accession>